<comment type="similarity">
    <text evidence="1">Belongs to the universal ribosomal protein uS2 family.</text>
</comment>
<protein>
    <recommendedName>
        <fullName evidence="1">Small ribosomal subunit protein uS2</fullName>
    </recommendedName>
    <alternativeName>
        <fullName evidence="2">30S ribosomal protein S2</fullName>
    </alternativeName>
</protein>
<proteinExistence type="inferred from homology"/>
<organism>
    <name type="scientific">Herminiimonas arsenicoxydans</name>
    <dbReference type="NCBI Taxonomy" id="204773"/>
    <lineage>
        <taxon>Bacteria</taxon>
        <taxon>Pseudomonadati</taxon>
        <taxon>Pseudomonadota</taxon>
        <taxon>Betaproteobacteria</taxon>
        <taxon>Burkholderiales</taxon>
        <taxon>Oxalobacteraceae</taxon>
        <taxon>Herminiimonas</taxon>
    </lineage>
</organism>
<accession>A4G4S1</accession>
<reference key="1">
    <citation type="journal article" date="2007" name="PLoS Genet.">
        <title>A tale of two oxidation states: bacterial colonization of arsenic-rich environments.</title>
        <authorList>
            <person name="Muller D."/>
            <person name="Medigue C."/>
            <person name="Koechler S."/>
            <person name="Barbe V."/>
            <person name="Barakat M."/>
            <person name="Talla E."/>
            <person name="Bonnefoy V."/>
            <person name="Krin E."/>
            <person name="Arsene-Ploetze F."/>
            <person name="Carapito C."/>
            <person name="Chandler M."/>
            <person name="Cournoyer B."/>
            <person name="Cruveiller S."/>
            <person name="Dossat C."/>
            <person name="Duval S."/>
            <person name="Heymann M."/>
            <person name="Leize E."/>
            <person name="Lieutaud A."/>
            <person name="Lievremont D."/>
            <person name="Makita Y."/>
            <person name="Mangenot S."/>
            <person name="Nitschke W."/>
            <person name="Ortet P."/>
            <person name="Perdrial N."/>
            <person name="Schoepp B."/>
            <person name="Siguier P."/>
            <person name="Simeonova D.D."/>
            <person name="Rouy Z."/>
            <person name="Segurens B."/>
            <person name="Turlin E."/>
            <person name="Vallenet D."/>
            <person name="van Dorsselaer A."/>
            <person name="Weiss S."/>
            <person name="Weissenbach J."/>
            <person name="Lett M.-C."/>
            <person name="Danchin A."/>
            <person name="Bertin P.N."/>
        </authorList>
    </citation>
    <scope>NUCLEOTIDE SEQUENCE [LARGE SCALE GENOMIC DNA]</scope>
    <source>
        <strain>ULPAs1</strain>
    </source>
</reference>
<feature type="chain" id="PRO_1000003978" description="Small ribosomal subunit protein uS2">
    <location>
        <begin position="1"/>
        <end position="248"/>
    </location>
</feature>
<name>RS2_HERAR</name>
<keyword id="KW-1185">Reference proteome</keyword>
<keyword id="KW-0687">Ribonucleoprotein</keyword>
<keyword id="KW-0689">Ribosomal protein</keyword>
<evidence type="ECO:0000255" key="1">
    <source>
        <dbReference type="HAMAP-Rule" id="MF_00291"/>
    </source>
</evidence>
<evidence type="ECO:0000305" key="2"/>
<dbReference type="EMBL" id="CU207211">
    <property type="protein sequence ID" value="CAL61508.1"/>
    <property type="molecule type" value="Genomic_DNA"/>
</dbReference>
<dbReference type="SMR" id="A4G4S1"/>
<dbReference type="STRING" id="204773.HEAR1335"/>
<dbReference type="KEGG" id="har:HEAR1335"/>
<dbReference type="eggNOG" id="COG0052">
    <property type="taxonomic scope" value="Bacteria"/>
</dbReference>
<dbReference type="HOGENOM" id="CLU_040318_1_3_4"/>
<dbReference type="OrthoDB" id="9808036at2"/>
<dbReference type="Proteomes" id="UP000006697">
    <property type="component" value="Chromosome"/>
</dbReference>
<dbReference type="GO" id="GO:0022627">
    <property type="term" value="C:cytosolic small ribosomal subunit"/>
    <property type="evidence" value="ECO:0007669"/>
    <property type="project" value="TreeGrafter"/>
</dbReference>
<dbReference type="GO" id="GO:0003735">
    <property type="term" value="F:structural constituent of ribosome"/>
    <property type="evidence" value="ECO:0007669"/>
    <property type="project" value="InterPro"/>
</dbReference>
<dbReference type="GO" id="GO:0006412">
    <property type="term" value="P:translation"/>
    <property type="evidence" value="ECO:0007669"/>
    <property type="project" value="UniProtKB-UniRule"/>
</dbReference>
<dbReference type="CDD" id="cd01425">
    <property type="entry name" value="RPS2"/>
    <property type="match status" value="1"/>
</dbReference>
<dbReference type="FunFam" id="1.10.287.610:FF:000001">
    <property type="entry name" value="30S ribosomal protein S2"/>
    <property type="match status" value="1"/>
</dbReference>
<dbReference type="Gene3D" id="3.40.50.10490">
    <property type="entry name" value="Glucose-6-phosphate isomerase like protein, domain 1"/>
    <property type="match status" value="1"/>
</dbReference>
<dbReference type="Gene3D" id="1.10.287.610">
    <property type="entry name" value="Helix hairpin bin"/>
    <property type="match status" value="1"/>
</dbReference>
<dbReference type="HAMAP" id="MF_00291_B">
    <property type="entry name" value="Ribosomal_uS2_B"/>
    <property type="match status" value="1"/>
</dbReference>
<dbReference type="InterPro" id="IPR001865">
    <property type="entry name" value="Ribosomal_uS2"/>
</dbReference>
<dbReference type="InterPro" id="IPR005706">
    <property type="entry name" value="Ribosomal_uS2_bac/mit/plastid"/>
</dbReference>
<dbReference type="InterPro" id="IPR018130">
    <property type="entry name" value="Ribosomal_uS2_CS"/>
</dbReference>
<dbReference type="InterPro" id="IPR023591">
    <property type="entry name" value="Ribosomal_uS2_flav_dom_sf"/>
</dbReference>
<dbReference type="NCBIfam" id="TIGR01011">
    <property type="entry name" value="rpsB_bact"/>
    <property type="match status" value="1"/>
</dbReference>
<dbReference type="PANTHER" id="PTHR12534">
    <property type="entry name" value="30S RIBOSOMAL PROTEIN S2 PROKARYOTIC AND ORGANELLAR"/>
    <property type="match status" value="1"/>
</dbReference>
<dbReference type="PANTHER" id="PTHR12534:SF0">
    <property type="entry name" value="SMALL RIBOSOMAL SUBUNIT PROTEIN US2M"/>
    <property type="match status" value="1"/>
</dbReference>
<dbReference type="Pfam" id="PF00318">
    <property type="entry name" value="Ribosomal_S2"/>
    <property type="match status" value="1"/>
</dbReference>
<dbReference type="PRINTS" id="PR00395">
    <property type="entry name" value="RIBOSOMALS2"/>
</dbReference>
<dbReference type="SUPFAM" id="SSF52313">
    <property type="entry name" value="Ribosomal protein S2"/>
    <property type="match status" value="1"/>
</dbReference>
<dbReference type="PROSITE" id="PS00962">
    <property type="entry name" value="RIBOSOMAL_S2_1"/>
    <property type="match status" value="1"/>
</dbReference>
<sequence>MSVTMREMLEAGVHFGHQTRFWNPKMAPYIFGHRNRIHIVNLEKTLGMYQEAMKYIKQLSSNRGTVLFVGTKRQARETIAAEAARAGMPYVDQRWLGGMLTNFKTIKTSIKRLKELEALVEDGSMEKLSKKEALMFEREKIKLEKSIGGIKDMGGIPDAIFVVDVGYHKGAITEAAKLGIPVIGVVDTNHSPEGVAYIIPGNDDSSKAIMLYARGVADAILEGRASATNDLVESIKGGDDFVEVNEQA</sequence>
<gene>
    <name evidence="1" type="primary">rpsB</name>
    <name type="ordered locus">HEAR1335</name>
</gene>